<keyword id="KW-0963">Cytoplasm</keyword>
<keyword id="KW-0521">NADP</keyword>
<keyword id="KW-0560">Oxidoreductase</keyword>
<keyword id="KW-0671">Queuosine biosynthesis</keyword>
<organism>
    <name type="scientific">Staphylococcus haemolyticus (strain JCSC1435)</name>
    <dbReference type="NCBI Taxonomy" id="279808"/>
    <lineage>
        <taxon>Bacteria</taxon>
        <taxon>Bacillati</taxon>
        <taxon>Bacillota</taxon>
        <taxon>Bacilli</taxon>
        <taxon>Bacillales</taxon>
        <taxon>Staphylococcaceae</taxon>
        <taxon>Staphylococcus</taxon>
    </lineage>
</organism>
<name>QUEF_STAHJ</name>
<sequence length="166" mass="19694">MTQGRQKEELQDITLLGNQNNKYEFDYTPEVLETFDNKHQGRDYFVKFNCPEFTSLCPITGQPDFATIYISYIPNIKMVESKSLKLYLFSFRNHGDFHEDCMNIIMNDLIDLMDPHYIEVWGKFTPRGGISIDPYTNYGRPNSKYEKMAEHRLMNHDLYPEKIDNR</sequence>
<gene>
    <name evidence="1" type="primary">queF</name>
    <name type="ordered locus">SH2165</name>
</gene>
<comment type="function">
    <text evidence="1">Catalyzes the NADPH-dependent reduction of 7-cyano-7-deazaguanine (preQ0) to 7-aminomethyl-7-deazaguanine (preQ1).</text>
</comment>
<comment type="catalytic activity">
    <reaction evidence="1">
        <text>7-aminomethyl-7-carbaguanine + 2 NADP(+) = 7-cyano-7-deazaguanine + 2 NADPH + 3 H(+)</text>
        <dbReference type="Rhea" id="RHEA:13409"/>
        <dbReference type="ChEBI" id="CHEBI:15378"/>
        <dbReference type="ChEBI" id="CHEBI:45075"/>
        <dbReference type="ChEBI" id="CHEBI:57783"/>
        <dbReference type="ChEBI" id="CHEBI:58349"/>
        <dbReference type="ChEBI" id="CHEBI:58703"/>
        <dbReference type="EC" id="1.7.1.13"/>
    </reaction>
</comment>
<comment type="pathway">
    <text evidence="1">tRNA modification; tRNA-queuosine biosynthesis.</text>
</comment>
<comment type="subcellular location">
    <subcellularLocation>
        <location evidence="1">Cytoplasm</location>
    </subcellularLocation>
</comment>
<comment type="similarity">
    <text evidence="1">Belongs to the GTP cyclohydrolase I family. QueF type 1 subfamily.</text>
</comment>
<feature type="chain" id="PRO_0000163002" description="NADPH-dependent 7-cyano-7-deazaguanine reductase">
    <location>
        <begin position="1"/>
        <end position="166"/>
    </location>
</feature>
<feature type="active site" description="Thioimide intermediate" evidence="1">
    <location>
        <position position="57"/>
    </location>
</feature>
<feature type="active site" description="Proton donor" evidence="1">
    <location>
        <position position="64"/>
    </location>
</feature>
<feature type="binding site" evidence="1">
    <location>
        <begin position="79"/>
        <end position="81"/>
    </location>
    <ligand>
        <name>substrate</name>
    </ligand>
</feature>
<feature type="binding site" evidence="1">
    <location>
        <begin position="98"/>
        <end position="99"/>
    </location>
    <ligand>
        <name>substrate</name>
    </ligand>
</feature>
<dbReference type="EC" id="1.7.1.13" evidence="1"/>
<dbReference type="EMBL" id="AP006716">
    <property type="protein sequence ID" value="BAE05474.1"/>
    <property type="molecule type" value="Genomic_DNA"/>
</dbReference>
<dbReference type="RefSeq" id="WP_011276427.1">
    <property type="nucleotide sequence ID" value="NC_007168.1"/>
</dbReference>
<dbReference type="SMR" id="Q4L4F1"/>
<dbReference type="GeneID" id="93781486"/>
<dbReference type="KEGG" id="sha:SH2165"/>
<dbReference type="eggNOG" id="COG0780">
    <property type="taxonomic scope" value="Bacteria"/>
</dbReference>
<dbReference type="HOGENOM" id="CLU_102489_0_1_9"/>
<dbReference type="OrthoDB" id="9795077at2"/>
<dbReference type="UniPathway" id="UPA00392"/>
<dbReference type="Proteomes" id="UP000000543">
    <property type="component" value="Chromosome"/>
</dbReference>
<dbReference type="GO" id="GO:0005737">
    <property type="term" value="C:cytoplasm"/>
    <property type="evidence" value="ECO:0007669"/>
    <property type="project" value="UniProtKB-SubCell"/>
</dbReference>
<dbReference type="GO" id="GO:0033739">
    <property type="term" value="F:preQ1 synthase activity"/>
    <property type="evidence" value="ECO:0007669"/>
    <property type="project" value="UniProtKB-UniRule"/>
</dbReference>
<dbReference type="GO" id="GO:0008616">
    <property type="term" value="P:queuosine biosynthetic process"/>
    <property type="evidence" value="ECO:0007669"/>
    <property type="project" value="UniProtKB-UniRule"/>
</dbReference>
<dbReference type="GO" id="GO:0006400">
    <property type="term" value="P:tRNA modification"/>
    <property type="evidence" value="ECO:0007669"/>
    <property type="project" value="UniProtKB-UniRule"/>
</dbReference>
<dbReference type="Gene3D" id="3.30.1130.10">
    <property type="match status" value="1"/>
</dbReference>
<dbReference type="HAMAP" id="MF_00818">
    <property type="entry name" value="QueF_type1"/>
    <property type="match status" value="1"/>
</dbReference>
<dbReference type="InterPro" id="IPR043133">
    <property type="entry name" value="GTP-CH-I_C/QueF"/>
</dbReference>
<dbReference type="InterPro" id="IPR050084">
    <property type="entry name" value="NADPH_dep_7-cyano-7-deazaG_red"/>
</dbReference>
<dbReference type="InterPro" id="IPR029500">
    <property type="entry name" value="QueF"/>
</dbReference>
<dbReference type="InterPro" id="IPR016856">
    <property type="entry name" value="QueF_type1"/>
</dbReference>
<dbReference type="NCBIfam" id="TIGR03139">
    <property type="entry name" value="QueF-II"/>
    <property type="match status" value="1"/>
</dbReference>
<dbReference type="PANTHER" id="PTHR34354">
    <property type="entry name" value="NADPH-DEPENDENT 7-CYANO-7-DEAZAGUANINE REDUCTASE"/>
    <property type="match status" value="1"/>
</dbReference>
<dbReference type="PANTHER" id="PTHR34354:SF1">
    <property type="entry name" value="NADPH-DEPENDENT 7-CYANO-7-DEAZAGUANINE REDUCTASE"/>
    <property type="match status" value="1"/>
</dbReference>
<dbReference type="Pfam" id="PF14489">
    <property type="entry name" value="QueF"/>
    <property type="match status" value="1"/>
</dbReference>
<dbReference type="PIRSF" id="PIRSF027377">
    <property type="entry name" value="Nitrile_oxidored_QueF"/>
    <property type="match status" value="1"/>
</dbReference>
<dbReference type="SUPFAM" id="SSF55620">
    <property type="entry name" value="Tetrahydrobiopterin biosynthesis enzymes-like"/>
    <property type="match status" value="1"/>
</dbReference>
<reference key="1">
    <citation type="journal article" date="2005" name="J. Bacteriol.">
        <title>Whole-genome sequencing of Staphylococcus haemolyticus uncovers the extreme plasticity of its genome and the evolution of human-colonizing staphylococcal species.</title>
        <authorList>
            <person name="Takeuchi F."/>
            <person name="Watanabe S."/>
            <person name="Baba T."/>
            <person name="Yuzawa H."/>
            <person name="Ito T."/>
            <person name="Morimoto Y."/>
            <person name="Kuroda M."/>
            <person name="Cui L."/>
            <person name="Takahashi M."/>
            <person name="Ankai A."/>
            <person name="Baba S."/>
            <person name="Fukui S."/>
            <person name="Lee J.C."/>
            <person name="Hiramatsu K."/>
        </authorList>
    </citation>
    <scope>NUCLEOTIDE SEQUENCE [LARGE SCALE GENOMIC DNA]</scope>
    <source>
        <strain>JCSC1435</strain>
    </source>
</reference>
<protein>
    <recommendedName>
        <fullName evidence="1">NADPH-dependent 7-cyano-7-deazaguanine reductase</fullName>
        <ecNumber evidence="1">1.7.1.13</ecNumber>
    </recommendedName>
    <alternativeName>
        <fullName evidence="1">7-cyano-7-carbaguanine reductase</fullName>
    </alternativeName>
    <alternativeName>
        <fullName evidence="1">NADPH-dependent nitrile oxidoreductase</fullName>
    </alternativeName>
    <alternativeName>
        <fullName evidence="1">PreQ(0) reductase</fullName>
    </alternativeName>
</protein>
<proteinExistence type="inferred from homology"/>
<evidence type="ECO:0000255" key="1">
    <source>
        <dbReference type="HAMAP-Rule" id="MF_00818"/>
    </source>
</evidence>
<accession>Q4L4F1</accession>